<organism>
    <name type="scientific">Coprinopsis cinerea (strain Okayama-7 / 130 / ATCC MYA-4618 / FGSC 9003)</name>
    <name type="common">Inky cap fungus</name>
    <name type="synonym">Hormographiella aspergillata</name>
    <dbReference type="NCBI Taxonomy" id="240176"/>
    <lineage>
        <taxon>Eukaryota</taxon>
        <taxon>Fungi</taxon>
        <taxon>Dikarya</taxon>
        <taxon>Basidiomycota</taxon>
        <taxon>Agaricomycotina</taxon>
        <taxon>Agaricomycetes</taxon>
        <taxon>Agaricomycetidae</taxon>
        <taxon>Agaricales</taxon>
        <taxon>Agaricineae</taxon>
        <taxon>Psathyrellaceae</taxon>
        <taxon>Coprinopsis</taxon>
    </lineage>
</organism>
<protein>
    <recommendedName>
        <fullName evidence="1">Elongation factor G, mitochondrial</fullName>
        <shortName evidence="1">EF-Gmt</shortName>
    </recommendedName>
    <alternativeName>
        <fullName evidence="1">Elongation factor G 1, mitochondrial</fullName>
        <shortName evidence="1">mEF-G 1</shortName>
    </alternativeName>
    <alternativeName>
        <fullName evidence="1">Elongation factor G1</fullName>
    </alternativeName>
</protein>
<gene>
    <name evidence="1" type="primary">MEF1</name>
    <name type="ORF">CC1G_12235</name>
</gene>
<proteinExistence type="inferred from homology"/>
<dbReference type="EMBL" id="AACS02000013">
    <property type="protein sequence ID" value="EAU83626.1"/>
    <property type="molecule type" value="Genomic_DNA"/>
</dbReference>
<dbReference type="RefSeq" id="XP_001838186.1">
    <property type="nucleotide sequence ID" value="XM_001838134.1"/>
</dbReference>
<dbReference type="SMR" id="A8P1W0"/>
<dbReference type="FunCoup" id="A8P1W0">
    <property type="interactions" value="336"/>
</dbReference>
<dbReference type="STRING" id="240176.A8P1W0"/>
<dbReference type="GeneID" id="6014758"/>
<dbReference type="KEGG" id="cci:CC1G_12235"/>
<dbReference type="VEuPathDB" id="FungiDB:CC1G_12235"/>
<dbReference type="eggNOG" id="KOG0465">
    <property type="taxonomic scope" value="Eukaryota"/>
</dbReference>
<dbReference type="HOGENOM" id="CLU_002794_4_1_1"/>
<dbReference type="InParanoid" id="A8P1W0"/>
<dbReference type="OMA" id="GQFAKVQ"/>
<dbReference type="OrthoDB" id="198619at2759"/>
<dbReference type="UniPathway" id="UPA00345"/>
<dbReference type="Proteomes" id="UP000001861">
    <property type="component" value="Unassembled WGS sequence"/>
</dbReference>
<dbReference type="GO" id="GO:0005739">
    <property type="term" value="C:mitochondrion"/>
    <property type="evidence" value="ECO:0007669"/>
    <property type="project" value="UniProtKB-SubCell"/>
</dbReference>
<dbReference type="GO" id="GO:0005525">
    <property type="term" value="F:GTP binding"/>
    <property type="evidence" value="ECO:0007669"/>
    <property type="project" value="UniProtKB-UniRule"/>
</dbReference>
<dbReference type="GO" id="GO:0003924">
    <property type="term" value="F:GTPase activity"/>
    <property type="evidence" value="ECO:0007669"/>
    <property type="project" value="UniProtKB-UniRule"/>
</dbReference>
<dbReference type="GO" id="GO:0003746">
    <property type="term" value="F:translation elongation factor activity"/>
    <property type="evidence" value="ECO:0007669"/>
    <property type="project" value="UniProtKB-UniRule"/>
</dbReference>
<dbReference type="GO" id="GO:0070125">
    <property type="term" value="P:mitochondrial translational elongation"/>
    <property type="evidence" value="ECO:0007669"/>
    <property type="project" value="UniProtKB-UniRule"/>
</dbReference>
<dbReference type="CDD" id="cd01886">
    <property type="entry name" value="EF-G"/>
    <property type="match status" value="1"/>
</dbReference>
<dbReference type="CDD" id="cd16262">
    <property type="entry name" value="EFG_III"/>
    <property type="match status" value="1"/>
</dbReference>
<dbReference type="CDD" id="cd01434">
    <property type="entry name" value="EFG_mtEFG1_IV"/>
    <property type="match status" value="1"/>
</dbReference>
<dbReference type="CDD" id="cd04091">
    <property type="entry name" value="mtEFG1_II_like"/>
    <property type="match status" value="1"/>
</dbReference>
<dbReference type="FunFam" id="3.30.230.10:FF:000003">
    <property type="entry name" value="Elongation factor G"/>
    <property type="match status" value="1"/>
</dbReference>
<dbReference type="FunFam" id="3.30.70.240:FF:000001">
    <property type="entry name" value="Elongation factor G"/>
    <property type="match status" value="1"/>
</dbReference>
<dbReference type="FunFam" id="3.30.70.870:FF:000001">
    <property type="entry name" value="Elongation factor G"/>
    <property type="match status" value="1"/>
</dbReference>
<dbReference type="FunFam" id="3.40.50.300:FF:000029">
    <property type="entry name" value="Elongation factor G"/>
    <property type="match status" value="1"/>
</dbReference>
<dbReference type="FunFam" id="2.40.30.10:FF:000022">
    <property type="entry name" value="Elongation factor G, mitochondrial"/>
    <property type="match status" value="1"/>
</dbReference>
<dbReference type="Gene3D" id="3.30.230.10">
    <property type="match status" value="1"/>
</dbReference>
<dbReference type="Gene3D" id="3.30.70.240">
    <property type="match status" value="1"/>
</dbReference>
<dbReference type="Gene3D" id="3.30.70.870">
    <property type="entry name" value="Elongation Factor G (Translational Gtpase), domain 3"/>
    <property type="match status" value="1"/>
</dbReference>
<dbReference type="Gene3D" id="3.40.50.300">
    <property type="entry name" value="P-loop containing nucleotide triphosphate hydrolases"/>
    <property type="match status" value="1"/>
</dbReference>
<dbReference type="Gene3D" id="2.40.30.10">
    <property type="entry name" value="Translation factors"/>
    <property type="match status" value="1"/>
</dbReference>
<dbReference type="HAMAP" id="MF_00054_B">
    <property type="entry name" value="EF_G_EF_2_B"/>
    <property type="match status" value="1"/>
</dbReference>
<dbReference type="InterPro" id="IPR041095">
    <property type="entry name" value="EFG_II"/>
</dbReference>
<dbReference type="InterPro" id="IPR009022">
    <property type="entry name" value="EFG_III"/>
</dbReference>
<dbReference type="InterPro" id="IPR035647">
    <property type="entry name" value="EFG_III/V"/>
</dbReference>
<dbReference type="InterPro" id="IPR047872">
    <property type="entry name" value="EFG_IV"/>
</dbReference>
<dbReference type="InterPro" id="IPR000640">
    <property type="entry name" value="EFG_V-like"/>
</dbReference>
<dbReference type="InterPro" id="IPR004161">
    <property type="entry name" value="EFTu-like_2"/>
</dbReference>
<dbReference type="InterPro" id="IPR031157">
    <property type="entry name" value="G_TR_CS"/>
</dbReference>
<dbReference type="InterPro" id="IPR027417">
    <property type="entry name" value="P-loop_NTPase"/>
</dbReference>
<dbReference type="InterPro" id="IPR020568">
    <property type="entry name" value="Ribosomal_Su5_D2-typ_SF"/>
</dbReference>
<dbReference type="InterPro" id="IPR014721">
    <property type="entry name" value="Ribsml_uS5_D2-typ_fold_subgr"/>
</dbReference>
<dbReference type="InterPro" id="IPR005225">
    <property type="entry name" value="Small_GTP-bd"/>
</dbReference>
<dbReference type="InterPro" id="IPR000795">
    <property type="entry name" value="T_Tr_GTP-bd_dom"/>
</dbReference>
<dbReference type="InterPro" id="IPR009000">
    <property type="entry name" value="Transl_B-barrel_sf"/>
</dbReference>
<dbReference type="InterPro" id="IPR004540">
    <property type="entry name" value="Transl_elong_EFG/EF2"/>
</dbReference>
<dbReference type="InterPro" id="IPR005517">
    <property type="entry name" value="Transl_elong_EFG/EF2_IV"/>
</dbReference>
<dbReference type="NCBIfam" id="TIGR00484">
    <property type="entry name" value="EF-G"/>
    <property type="match status" value="1"/>
</dbReference>
<dbReference type="NCBIfam" id="NF009381">
    <property type="entry name" value="PRK12740.1-5"/>
    <property type="match status" value="1"/>
</dbReference>
<dbReference type="NCBIfam" id="TIGR00231">
    <property type="entry name" value="small_GTP"/>
    <property type="match status" value="1"/>
</dbReference>
<dbReference type="PANTHER" id="PTHR43636">
    <property type="entry name" value="ELONGATION FACTOR G, MITOCHONDRIAL"/>
    <property type="match status" value="1"/>
</dbReference>
<dbReference type="PANTHER" id="PTHR43636:SF2">
    <property type="entry name" value="ELONGATION FACTOR G, MITOCHONDRIAL"/>
    <property type="match status" value="1"/>
</dbReference>
<dbReference type="Pfam" id="PF00679">
    <property type="entry name" value="EFG_C"/>
    <property type="match status" value="1"/>
</dbReference>
<dbReference type="Pfam" id="PF14492">
    <property type="entry name" value="EFG_III"/>
    <property type="match status" value="1"/>
</dbReference>
<dbReference type="Pfam" id="PF03764">
    <property type="entry name" value="EFG_IV"/>
    <property type="match status" value="1"/>
</dbReference>
<dbReference type="Pfam" id="PF00009">
    <property type="entry name" value="GTP_EFTU"/>
    <property type="match status" value="1"/>
</dbReference>
<dbReference type="Pfam" id="PF03144">
    <property type="entry name" value="GTP_EFTU_D2"/>
    <property type="match status" value="1"/>
</dbReference>
<dbReference type="PRINTS" id="PR00315">
    <property type="entry name" value="ELONGATNFCT"/>
</dbReference>
<dbReference type="SMART" id="SM00838">
    <property type="entry name" value="EFG_C"/>
    <property type="match status" value="1"/>
</dbReference>
<dbReference type="SMART" id="SM00889">
    <property type="entry name" value="EFG_IV"/>
    <property type="match status" value="1"/>
</dbReference>
<dbReference type="SUPFAM" id="SSF54980">
    <property type="entry name" value="EF-G C-terminal domain-like"/>
    <property type="match status" value="2"/>
</dbReference>
<dbReference type="SUPFAM" id="SSF52540">
    <property type="entry name" value="P-loop containing nucleoside triphosphate hydrolases"/>
    <property type="match status" value="1"/>
</dbReference>
<dbReference type="SUPFAM" id="SSF54211">
    <property type="entry name" value="Ribosomal protein S5 domain 2-like"/>
    <property type="match status" value="1"/>
</dbReference>
<dbReference type="SUPFAM" id="SSF50447">
    <property type="entry name" value="Translation proteins"/>
    <property type="match status" value="1"/>
</dbReference>
<dbReference type="PROSITE" id="PS00301">
    <property type="entry name" value="G_TR_1"/>
    <property type="match status" value="1"/>
</dbReference>
<dbReference type="PROSITE" id="PS51722">
    <property type="entry name" value="G_TR_2"/>
    <property type="match status" value="1"/>
</dbReference>
<comment type="function">
    <text evidence="1">Mitochondrial GTPase that catalyzes the GTP-dependent ribosomal translocation step during translation elongation. During this step, the ribosome changes from the pre-translocational (PRE) to the post-translocational (POST) state as the newly formed A-site-bound peptidyl-tRNA and P-site-bound deacylated tRNA move to the P and E sites, respectively. Catalyzes the coordinated movement of the two tRNA molecules, the mRNA and conformational changes in the ribosome.</text>
</comment>
<comment type="pathway">
    <text evidence="1">Protein biosynthesis; polypeptide chain elongation.</text>
</comment>
<comment type="subcellular location">
    <subcellularLocation>
        <location evidence="1">Mitochondrion</location>
    </subcellularLocation>
</comment>
<comment type="similarity">
    <text evidence="3">Belongs to the TRAFAC class translation factor GTPase superfamily. Classic translation factor GTPase family. EF-G/EF-2 subfamily.</text>
</comment>
<reference key="1">
    <citation type="journal article" date="2010" name="Proc. Natl. Acad. Sci. U.S.A.">
        <title>Insights into evolution of multicellular fungi from the assembled chromosomes of the mushroom Coprinopsis cinerea (Coprinus cinereus).</title>
        <authorList>
            <person name="Stajich J.E."/>
            <person name="Wilke S.K."/>
            <person name="Ahren D."/>
            <person name="Au C.H."/>
            <person name="Birren B.W."/>
            <person name="Borodovsky M."/>
            <person name="Burns C."/>
            <person name="Canbaeck B."/>
            <person name="Casselton L.A."/>
            <person name="Cheng C.K."/>
            <person name="Deng J."/>
            <person name="Dietrich F.S."/>
            <person name="Fargo D.C."/>
            <person name="Farman M.L."/>
            <person name="Gathman A.C."/>
            <person name="Goldberg J."/>
            <person name="Guigo R."/>
            <person name="Hoegger P.J."/>
            <person name="Hooker J.B."/>
            <person name="Huggins A."/>
            <person name="James T.Y."/>
            <person name="Kamada T."/>
            <person name="Kilaru S."/>
            <person name="Kodira C."/>
            <person name="Kuees U."/>
            <person name="Kupfer D."/>
            <person name="Kwan H.S."/>
            <person name="Lomsadze A."/>
            <person name="Li W."/>
            <person name="Lilly W.W."/>
            <person name="Ma L.-J."/>
            <person name="Mackey A.J."/>
            <person name="Manning G."/>
            <person name="Martin F."/>
            <person name="Muraguchi H."/>
            <person name="Natvig D.O."/>
            <person name="Palmerini H."/>
            <person name="Ramesh M.A."/>
            <person name="Rehmeyer C.J."/>
            <person name="Roe B.A."/>
            <person name="Shenoy N."/>
            <person name="Stanke M."/>
            <person name="Ter-Hovhannisyan V."/>
            <person name="Tunlid A."/>
            <person name="Velagapudi R."/>
            <person name="Vision T.J."/>
            <person name="Zeng Q."/>
            <person name="Zolan M.E."/>
            <person name="Pukkila P.J."/>
        </authorList>
    </citation>
    <scope>NUCLEOTIDE SEQUENCE [LARGE SCALE GENOMIC DNA]</scope>
    <source>
        <strain>Okayama-7 / 130 / ATCC MYA-4618 / FGSC 9003</strain>
    </source>
</reference>
<name>EFGM_COPC7</name>
<sequence length="818" mass="90472">MFLGRAASRTCRHSQPLRVAARAKSTTTAVASSSWHQYGVTGGILASTSSSSRTVVNPAKQRRWVRMASTATATKPTEEASSSDQPPAPAHKLTDNDVKRLTFQRNIGISAHIDSGKTTLSERILFYTGKIREIHEVRGRDAVGAKMDNMDLEREKGITIQSAATFCDWEATNPEDGSKQKYSINVIDTPGHVDFTIEVERALRVLDGAILVLCAVAGVQSQTTTVDRQMRRYNVPRISFINKMDRPGANPWRIVNQIRTKLRMPAAAVQVPIGTEDELKGVVDLVHWRALYNEGPKGTEIRVSKDIPESVAELAKQKRAELIEQLAEVDEEIGELFLMDETPTNRQIADAIRRATIDLKFSPVFMGSAMKNTGVQFLLDGVCEYLPNPSEREVLAIDNKNLDPATASSQASQTPNVPLVPAAAAPFVGLAFKLEEGRFGQLTYVRVYQGTLKKAMNIWNVRTGKKVKVPRLVRMHSDEMEDIDSIGPGEICAMFGVECSSGDTFTDGTSTYSMTSMFVPEPVISLAIKPKGQETPNFSRALNRFQKEDPTFRVHIDQESKETIISGMGELHLEIYVERMRREYNTECITGKPRVAFRETITQRAEFAYTHKKQTGGAGQFARVIGYIEPMEMDPETGKDVAFENLVMGGNIPTNFIPAVEKGFYEALEKGSLTGNPITGVRFVLKDGAFHAVDSSELAFRLATIGAFREAFKKARGIVLEPVMTVDVVAPSEFQSNVIGGLNTRRGTIVDSEVRDDEFTAVAEVALNDMFGYSNQLRGSTQGKGEFSMEYKHHAPVLPNVQKELEEAYQKTLPQSKK</sequence>
<feature type="transit peptide" description="Mitochondrion" evidence="1">
    <location>
        <begin position="1"/>
        <end position="23"/>
    </location>
</feature>
<feature type="chain" id="PRO_0000385569" description="Elongation factor G, mitochondrial">
    <location>
        <begin position="24"/>
        <end position="818"/>
    </location>
</feature>
<feature type="domain" description="tr-type G">
    <location>
        <begin position="102"/>
        <end position="390"/>
    </location>
</feature>
<feature type="region of interest" description="Disordered" evidence="2">
    <location>
        <begin position="67"/>
        <end position="96"/>
    </location>
</feature>
<feature type="compositionally biased region" description="Polar residues" evidence="2">
    <location>
        <begin position="69"/>
        <end position="85"/>
    </location>
</feature>
<feature type="binding site" evidence="1">
    <location>
        <begin position="111"/>
        <end position="118"/>
    </location>
    <ligand>
        <name>GTP</name>
        <dbReference type="ChEBI" id="CHEBI:37565"/>
    </ligand>
</feature>
<feature type="binding site" evidence="1">
    <location>
        <begin position="188"/>
        <end position="192"/>
    </location>
    <ligand>
        <name>GTP</name>
        <dbReference type="ChEBI" id="CHEBI:37565"/>
    </ligand>
</feature>
<feature type="binding site" evidence="1">
    <location>
        <begin position="242"/>
        <end position="245"/>
    </location>
    <ligand>
        <name>GTP</name>
        <dbReference type="ChEBI" id="CHEBI:37565"/>
    </ligand>
</feature>
<keyword id="KW-0251">Elongation factor</keyword>
<keyword id="KW-0342">GTP-binding</keyword>
<keyword id="KW-0496">Mitochondrion</keyword>
<keyword id="KW-0547">Nucleotide-binding</keyword>
<keyword id="KW-0648">Protein biosynthesis</keyword>
<keyword id="KW-1185">Reference proteome</keyword>
<keyword id="KW-0809">Transit peptide</keyword>
<evidence type="ECO:0000255" key="1">
    <source>
        <dbReference type="HAMAP-Rule" id="MF_03061"/>
    </source>
</evidence>
<evidence type="ECO:0000256" key="2">
    <source>
        <dbReference type="SAM" id="MobiDB-lite"/>
    </source>
</evidence>
<evidence type="ECO:0000305" key="3"/>
<accession>A8P1W0</accession>